<accession>P28968</accession>
<accession>Q66VC3</accession>
<accession>Q6DLE0</accession>
<gene>
    <name type="primary">EUs4</name>
    <name type="ordered locus">71</name>
</gene>
<protein>
    <recommendedName>
        <fullName>Glycoprotein gp2</fullName>
    </recommendedName>
    <alternativeName>
        <fullName>Glycoprotein X</fullName>
        <shortName>GpX</shortName>
    </alternativeName>
</protein>
<name>GP2_EHV1B</name>
<sequence>MGFIYARKLLLCMAVSIYAIGSTTTTETTTSSSSTSGSGQSTSSGTTNSSSSPTTSPPTTSSSPPTSTHTSSPSSTSTQSSSTAATSSSAPSTASSTTSIPTSTSTETTTTTPTASTTTPTTTTAAPTTAATTTAVTTAASTSAETTTATATATSTPTTTTPTSTTTTTATTTVPTTASTTTDTTTAATTTAATTTAATTTAATTTAATTTAATTTAATTTAATTSSATTAATTTAATTTAATTTAATTTAATTTAATTTGSPTSGSTSTTGASTSTPSASTATSATPTSTSTSAAATTSTPTPTSAATSAESTTEAPTSTPTTDTTTPSEATTATTSPESTTVSASTTSATTTAFTTESHTSPDSSTGSTSTAEPSSTFTLTPSTATPSTDQFTGSSASTESDSTDSSTVPTTGTESITESSSTTEASTNLGSSTYESTEALETPDGNTTSGNTTPSPSPRTPSFADTQQTPDNGVSTQHTTINDHTTANAQKHAGHHRGRAGGRRGSPQGGSHTTPHPDRLTPSPDDTYDDDTNHPNGRNNSIEIVPQLPPDRPIIELGVATLRKNFMEASCTVETNSGLAIFWKIGNASVDAFNRGTTHTRLMRNGVPVYALVSTLRVPWLNVIPLTKITCAACPTNLVAGDGVDLNSCTTKSTTIPCPGQQRTHIFFSAKGDRAVCITSELVSQPTITWSVGSDRLRNDGFSQTWYGIQPGVCGILRSEVRIHRTTWRFGSTSKDYLCEVSASDSKTSDYKVLPNAHSTSNFALVAATTLTVTILCLLCCLYCMLTRPRASVY</sequence>
<proteinExistence type="inferred from homology"/>
<feature type="signal peptide" evidence="1">
    <location>
        <begin position="1"/>
        <end position="25"/>
    </location>
</feature>
<feature type="chain" id="PRO_0000038296" description="Glycoprotein gp2">
    <location>
        <begin position="26"/>
        <end position="797"/>
    </location>
</feature>
<feature type="transmembrane region" description="Helical" evidence="1">
    <location>
        <begin position="766"/>
        <end position="790"/>
    </location>
</feature>
<feature type="region of interest" description="Disordered" evidence="2">
    <location>
        <begin position="24"/>
        <end position="188"/>
    </location>
</feature>
<feature type="region of interest" description="Disordered" evidence="2">
    <location>
        <begin position="212"/>
        <end position="549"/>
    </location>
</feature>
<feature type="compositionally biased region" description="Low complexity" evidence="2">
    <location>
        <begin position="212"/>
        <end position="373"/>
    </location>
</feature>
<feature type="compositionally biased region" description="Polar residues" evidence="2">
    <location>
        <begin position="374"/>
        <end position="394"/>
    </location>
</feature>
<feature type="compositionally biased region" description="Low complexity" evidence="2">
    <location>
        <begin position="395"/>
        <end position="430"/>
    </location>
</feature>
<feature type="compositionally biased region" description="Low complexity" evidence="2">
    <location>
        <begin position="445"/>
        <end position="457"/>
    </location>
</feature>
<feature type="compositionally biased region" description="Polar residues" evidence="2">
    <location>
        <begin position="466"/>
        <end position="492"/>
    </location>
</feature>
<feature type="compositionally biased region" description="Basic residues" evidence="2">
    <location>
        <begin position="495"/>
        <end position="505"/>
    </location>
</feature>
<feature type="glycosylation site" description="N-linked (GlcNAc...) asparagine; by host" evidence="1">
    <location>
        <position position="590"/>
    </location>
</feature>
<feature type="sequence variant" description="In strain: RacL11.">
    <original>TA</original>
    <variation>SS</variation>
    <location>
        <begin position="221"/>
        <end position="222"/>
    </location>
</feature>
<feature type="sequence variant" description="In strain: RacL11.">
    <original>SSATTAATTTAAT</original>
    <variation>AATTSSA</variation>
    <location>
        <begin position="226"/>
        <end position="238"/>
    </location>
</feature>
<feature type="sequence variant" description="In strain: RacL11.">
    <original>T</original>
    <variation>A</variation>
    <location>
        <position position="430"/>
    </location>
</feature>
<feature type="sequence variant" description="In strain: RacL11.">
    <original>E</original>
    <variation>G</variation>
    <location>
        <position position="441"/>
    </location>
</feature>
<dbReference type="EMBL" id="AY665713">
    <property type="protein sequence ID" value="AAT67328.1"/>
    <property type="molecule type" value="Genomic_DNA"/>
</dbReference>
<dbReference type="EMBL" id="AY702017">
    <property type="protein sequence ID" value="AAU09476.1"/>
    <property type="molecule type" value="Genomic_DNA"/>
</dbReference>
<dbReference type="PIR" id="H36802">
    <property type="entry name" value="VGBEX1"/>
</dbReference>
<dbReference type="GlyCosmos" id="P28968">
    <property type="glycosylation" value="1 site, No reported glycans"/>
</dbReference>
<dbReference type="KEGG" id="vg:2948560"/>
<dbReference type="Proteomes" id="UP000001189">
    <property type="component" value="Segment"/>
</dbReference>
<dbReference type="GO" id="GO:0016020">
    <property type="term" value="C:membrane"/>
    <property type="evidence" value="ECO:0007669"/>
    <property type="project" value="UniProtKB-KW"/>
</dbReference>
<dbReference type="GO" id="GO:0055036">
    <property type="term" value="C:virion membrane"/>
    <property type="evidence" value="ECO:0007669"/>
    <property type="project" value="UniProtKB-SubCell"/>
</dbReference>
<dbReference type="GO" id="GO:0016032">
    <property type="term" value="P:viral process"/>
    <property type="evidence" value="ECO:0007669"/>
    <property type="project" value="InterPro"/>
</dbReference>
<dbReference type="InterPro" id="IPR010278">
    <property type="entry name" value="Varicellovirus_Gp2_glycop"/>
</dbReference>
<dbReference type="Pfam" id="PF05955">
    <property type="entry name" value="Herpes_gp2"/>
    <property type="match status" value="1"/>
</dbReference>
<evidence type="ECO:0000255" key="1"/>
<evidence type="ECO:0000256" key="2">
    <source>
        <dbReference type="SAM" id="MobiDB-lite"/>
    </source>
</evidence>
<evidence type="ECO:0000305" key="3"/>
<evidence type="ECO:0000305" key="4">
    <source>
    </source>
</evidence>
<organism>
    <name type="scientific">Equine herpesvirus 1 (strain Ab4p)</name>
    <name type="common">EHV-1</name>
    <name type="synonym">Equine abortion virus</name>
    <dbReference type="NCBI Taxonomy" id="31520"/>
    <lineage>
        <taxon>Viruses</taxon>
        <taxon>Duplodnaviria</taxon>
        <taxon>Heunggongvirae</taxon>
        <taxon>Peploviricota</taxon>
        <taxon>Herviviricetes</taxon>
        <taxon>Herpesvirales</taxon>
        <taxon>Orthoherpesviridae</taxon>
        <taxon>Alphaherpesvirinae</taxon>
        <taxon>Varicellovirus</taxon>
        <taxon>Varicellovirus equidalpha1</taxon>
        <taxon>Equid alphaherpesvirus 1</taxon>
    </lineage>
</organism>
<reference key="1">
    <citation type="journal article" date="1992" name="Virology">
        <title>The DNA sequence of equine herpesvirus-1.</title>
        <authorList>
            <person name="Telford E.A.R."/>
            <person name="Watson M.S."/>
            <person name="McBride K."/>
            <person name="Davison A.J."/>
        </authorList>
    </citation>
    <scope>NUCLEOTIDE SEQUENCE [LARGE SCALE GENOMIC DNA]</scope>
</reference>
<reference key="2">
    <citation type="journal article" date="2005" name="J. Virol.">
        <title>Expression of the full-length form of gp2 of equine herpesvirus 1 (EHV-1) completely restores respiratory virulence to the attenuated EHV-1 strain KyA in CBA mice.</title>
        <authorList>
            <person name="Smith P.M."/>
            <person name="Kahan S.M."/>
            <person name="Rorex C.B."/>
            <person name="von Einem J."/>
            <person name="Osterrieder N."/>
            <person name="O'Callaghan D.J."/>
        </authorList>
    </citation>
    <scope>NUCLEOTIDE SEQUENCE [GENOMIC DNA]</scope>
    <scope>FUNCTION</scope>
    <source>
        <strain>RacL11</strain>
    </source>
</reference>
<comment type="function">
    <text evidence="4">Virulence factor.</text>
</comment>
<comment type="subcellular location">
    <subcellularLocation>
        <location evidence="3">Virion membrane</location>
        <topology evidence="3">Single-pass membrane protein</topology>
    </subcellularLocation>
</comment>
<organismHost>
    <name type="scientific">Equus caballus</name>
    <name type="common">Horse</name>
    <dbReference type="NCBI Taxonomy" id="9796"/>
</organismHost>
<keyword id="KW-0325">Glycoprotein</keyword>
<keyword id="KW-0472">Membrane</keyword>
<keyword id="KW-1185">Reference proteome</keyword>
<keyword id="KW-0732">Signal</keyword>
<keyword id="KW-0812">Transmembrane</keyword>
<keyword id="KW-1133">Transmembrane helix</keyword>
<keyword id="KW-0946">Virion</keyword>
<keyword id="KW-0843">Virulence</keyword>